<dbReference type="EC" id="2.4.2.1" evidence="1"/>
<dbReference type="EC" id="2.4.2.2" evidence="1"/>
<dbReference type="EMBL" id="AE006468">
    <property type="protein sequence ID" value="AAL19345.1"/>
    <property type="molecule type" value="Genomic_DNA"/>
</dbReference>
<dbReference type="RefSeq" id="WP_000941952.1">
    <property type="nucleotide sequence ID" value="NC_003197.2"/>
</dbReference>
<dbReference type="PDB" id="7EYL">
    <property type="method" value="X-ray"/>
    <property type="resolution" value="1.20 A"/>
    <property type="chains" value="A/B=1-94"/>
</dbReference>
<dbReference type="PDBsum" id="7EYL"/>
<dbReference type="SMR" id="Q8ZRE7"/>
<dbReference type="STRING" id="99287.STM0391"/>
<dbReference type="PaxDb" id="99287-STM0391"/>
<dbReference type="KEGG" id="stm:STM0391"/>
<dbReference type="PATRIC" id="fig|99287.12.peg.416"/>
<dbReference type="HOGENOM" id="CLU_157874_0_0_6"/>
<dbReference type="OMA" id="ADYCCSY"/>
<dbReference type="PhylomeDB" id="Q8ZRE7"/>
<dbReference type="BioCyc" id="SENT99287:STM0391-MONOMER"/>
<dbReference type="Proteomes" id="UP000001014">
    <property type="component" value="Chromosome"/>
</dbReference>
<dbReference type="GO" id="GO:0005829">
    <property type="term" value="C:cytosol"/>
    <property type="evidence" value="ECO:0000318"/>
    <property type="project" value="GO_Central"/>
</dbReference>
<dbReference type="GO" id="GO:0047975">
    <property type="term" value="F:guanosine phosphorylase activity"/>
    <property type="evidence" value="ECO:0007669"/>
    <property type="project" value="UniProtKB-EC"/>
</dbReference>
<dbReference type="GO" id="GO:0004731">
    <property type="term" value="F:purine-nucleoside phosphorylase activity"/>
    <property type="evidence" value="ECO:0000318"/>
    <property type="project" value="GO_Central"/>
</dbReference>
<dbReference type="GO" id="GO:0016154">
    <property type="term" value="F:pyrimidine-nucleoside phosphorylase activity"/>
    <property type="evidence" value="ECO:0000318"/>
    <property type="project" value="GO_Central"/>
</dbReference>
<dbReference type="GO" id="GO:0009032">
    <property type="term" value="F:thymidine phosphorylase activity"/>
    <property type="evidence" value="ECO:0007669"/>
    <property type="project" value="UniProtKB-EC"/>
</dbReference>
<dbReference type="GO" id="GO:0004850">
    <property type="term" value="F:uridine phosphorylase activity"/>
    <property type="evidence" value="ECO:0007669"/>
    <property type="project" value="UniProtKB-EC"/>
</dbReference>
<dbReference type="CDD" id="cd20296">
    <property type="entry name" value="cupin_PpnP-like"/>
    <property type="match status" value="1"/>
</dbReference>
<dbReference type="FunFam" id="2.60.120.10:FF:000016">
    <property type="entry name" value="Pyrimidine/purine nucleoside phosphorylase"/>
    <property type="match status" value="1"/>
</dbReference>
<dbReference type="Gene3D" id="2.60.120.10">
    <property type="entry name" value="Jelly Rolls"/>
    <property type="match status" value="1"/>
</dbReference>
<dbReference type="HAMAP" id="MF_01537">
    <property type="entry name" value="Nucleos_phosphorylase_PpnP"/>
    <property type="match status" value="1"/>
</dbReference>
<dbReference type="InterPro" id="IPR009664">
    <property type="entry name" value="Ppnp"/>
</dbReference>
<dbReference type="InterPro" id="IPR014710">
    <property type="entry name" value="RmlC-like_jellyroll"/>
</dbReference>
<dbReference type="InterPro" id="IPR011051">
    <property type="entry name" value="RmlC_Cupin_sf"/>
</dbReference>
<dbReference type="NCBIfam" id="NF007875">
    <property type="entry name" value="PRK10579.1"/>
    <property type="match status" value="1"/>
</dbReference>
<dbReference type="PANTHER" id="PTHR36540">
    <property type="entry name" value="PYRIMIDINE/PURINE NUCLEOSIDE PHOSPHORYLASE"/>
    <property type="match status" value="1"/>
</dbReference>
<dbReference type="PANTHER" id="PTHR36540:SF1">
    <property type="entry name" value="PYRIMIDINE_PURINE NUCLEOSIDE PHOSPHORYLASE"/>
    <property type="match status" value="1"/>
</dbReference>
<dbReference type="Pfam" id="PF06865">
    <property type="entry name" value="Ppnp"/>
    <property type="match status" value="1"/>
</dbReference>
<dbReference type="SUPFAM" id="SSF51182">
    <property type="entry name" value="RmlC-like cupins"/>
    <property type="match status" value="1"/>
</dbReference>
<name>PPNP_SALTY</name>
<gene>
    <name evidence="1" type="primary">ppnP</name>
    <name type="ordered locus">STM0391</name>
</gene>
<reference key="1">
    <citation type="journal article" date="2001" name="Nature">
        <title>Complete genome sequence of Salmonella enterica serovar Typhimurium LT2.</title>
        <authorList>
            <person name="McClelland M."/>
            <person name="Sanderson K.E."/>
            <person name="Spieth J."/>
            <person name="Clifton S.W."/>
            <person name="Latreille P."/>
            <person name="Courtney L."/>
            <person name="Porwollik S."/>
            <person name="Ali J."/>
            <person name="Dante M."/>
            <person name="Du F."/>
            <person name="Hou S."/>
            <person name="Layman D."/>
            <person name="Leonard S."/>
            <person name="Nguyen C."/>
            <person name="Scott K."/>
            <person name="Holmes A."/>
            <person name="Grewal N."/>
            <person name="Mulvaney E."/>
            <person name="Ryan E."/>
            <person name="Sun H."/>
            <person name="Florea L."/>
            <person name="Miller W."/>
            <person name="Stoneking T."/>
            <person name="Nhan M."/>
            <person name="Waterston R."/>
            <person name="Wilson R.K."/>
        </authorList>
    </citation>
    <scope>NUCLEOTIDE SEQUENCE [LARGE SCALE GENOMIC DNA]</scope>
    <source>
        <strain>LT2 / SGSC1412 / ATCC 700720</strain>
    </source>
</reference>
<evidence type="ECO:0000255" key="1">
    <source>
        <dbReference type="HAMAP-Rule" id="MF_01537"/>
    </source>
</evidence>
<evidence type="ECO:0007829" key="2">
    <source>
        <dbReference type="PDB" id="7EYL"/>
    </source>
</evidence>
<keyword id="KW-0002">3D-structure</keyword>
<keyword id="KW-0328">Glycosyltransferase</keyword>
<keyword id="KW-1185">Reference proteome</keyword>
<keyword id="KW-0808">Transferase</keyword>
<protein>
    <recommendedName>
        <fullName evidence="1">Pyrimidine/purine nucleoside phosphorylase</fullName>
        <ecNumber evidence="1">2.4.2.1</ecNumber>
        <ecNumber evidence="1">2.4.2.2</ecNumber>
    </recommendedName>
    <alternativeName>
        <fullName evidence="1">Adenosine phosphorylase</fullName>
    </alternativeName>
    <alternativeName>
        <fullName evidence="1">Cytidine phosphorylase</fullName>
    </alternativeName>
    <alternativeName>
        <fullName evidence="1">Guanosine phosphorylase</fullName>
    </alternativeName>
    <alternativeName>
        <fullName evidence="1">Inosine phosphorylase</fullName>
    </alternativeName>
    <alternativeName>
        <fullName evidence="1">Thymidine phosphorylase</fullName>
    </alternativeName>
    <alternativeName>
        <fullName evidence="1">Uridine phosphorylase</fullName>
    </alternativeName>
    <alternativeName>
        <fullName evidence="1">Xanthosine phosphorylase</fullName>
    </alternativeName>
</protein>
<comment type="function">
    <text evidence="1">Catalyzes the phosphorolysis of diverse nucleosides, yielding D-ribose 1-phosphate and the respective free bases. Can use uridine, adenosine, guanosine, cytidine, thymidine, inosine and xanthosine as substrates. Also catalyzes the reverse reactions.</text>
</comment>
<comment type="catalytic activity">
    <reaction evidence="1">
        <text>a purine D-ribonucleoside + phosphate = a purine nucleobase + alpha-D-ribose 1-phosphate</text>
        <dbReference type="Rhea" id="RHEA:19805"/>
        <dbReference type="ChEBI" id="CHEBI:26386"/>
        <dbReference type="ChEBI" id="CHEBI:43474"/>
        <dbReference type="ChEBI" id="CHEBI:57720"/>
        <dbReference type="ChEBI" id="CHEBI:142355"/>
        <dbReference type="EC" id="2.4.2.1"/>
    </reaction>
</comment>
<comment type="catalytic activity">
    <reaction evidence="1">
        <text>adenosine + phosphate = alpha-D-ribose 1-phosphate + adenine</text>
        <dbReference type="Rhea" id="RHEA:27642"/>
        <dbReference type="ChEBI" id="CHEBI:16335"/>
        <dbReference type="ChEBI" id="CHEBI:16708"/>
        <dbReference type="ChEBI" id="CHEBI:43474"/>
        <dbReference type="ChEBI" id="CHEBI:57720"/>
        <dbReference type="EC" id="2.4.2.1"/>
    </reaction>
</comment>
<comment type="catalytic activity">
    <reaction evidence="1">
        <text>cytidine + phosphate = cytosine + alpha-D-ribose 1-phosphate</text>
        <dbReference type="Rhea" id="RHEA:52540"/>
        <dbReference type="ChEBI" id="CHEBI:16040"/>
        <dbReference type="ChEBI" id="CHEBI:17562"/>
        <dbReference type="ChEBI" id="CHEBI:43474"/>
        <dbReference type="ChEBI" id="CHEBI:57720"/>
        <dbReference type="EC" id="2.4.2.2"/>
    </reaction>
</comment>
<comment type="catalytic activity">
    <reaction evidence="1">
        <text>guanosine + phosphate = alpha-D-ribose 1-phosphate + guanine</text>
        <dbReference type="Rhea" id="RHEA:13233"/>
        <dbReference type="ChEBI" id="CHEBI:16235"/>
        <dbReference type="ChEBI" id="CHEBI:16750"/>
        <dbReference type="ChEBI" id="CHEBI:43474"/>
        <dbReference type="ChEBI" id="CHEBI:57720"/>
        <dbReference type="EC" id="2.4.2.1"/>
    </reaction>
</comment>
<comment type="catalytic activity">
    <reaction evidence="1">
        <text>inosine + phosphate = alpha-D-ribose 1-phosphate + hypoxanthine</text>
        <dbReference type="Rhea" id="RHEA:27646"/>
        <dbReference type="ChEBI" id="CHEBI:17368"/>
        <dbReference type="ChEBI" id="CHEBI:17596"/>
        <dbReference type="ChEBI" id="CHEBI:43474"/>
        <dbReference type="ChEBI" id="CHEBI:57720"/>
        <dbReference type="EC" id="2.4.2.1"/>
    </reaction>
</comment>
<comment type="catalytic activity">
    <reaction evidence="1">
        <text>thymidine + phosphate = 2-deoxy-alpha-D-ribose 1-phosphate + thymine</text>
        <dbReference type="Rhea" id="RHEA:16037"/>
        <dbReference type="ChEBI" id="CHEBI:17748"/>
        <dbReference type="ChEBI" id="CHEBI:17821"/>
        <dbReference type="ChEBI" id="CHEBI:43474"/>
        <dbReference type="ChEBI" id="CHEBI:57259"/>
        <dbReference type="EC" id="2.4.2.2"/>
    </reaction>
</comment>
<comment type="catalytic activity">
    <reaction evidence="1">
        <text>uridine + phosphate = alpha-D-ribose 1-phosphate + uracil</text>
        <dbReference type="Rhea" id="RHEA:24388"/>
        <dbReference type="ChEBI" id="CHEBI:16704"/>
        <dbReference type="ChEBI" id="CHEBI:17568"/>
        <dbReference type="ChEBI" id="CHEBI:43474"/>
        <dbReference type="ChEBI" id="CHEBI:57720"/>
        <dbReference type="EC" id="2.4.2.2"/>
    </reaction>
</comment>
<comment type="catalytic activity">
    <reaction evidence="1">
        <text>xanthosine + phosphate = alpha-D-ribose 1-phosphate + xanthine</text>
        <dbReference type="Rhea" id="RHEA:27638"/>
        <dbReference type="ChEBI" id="CHEBI:17712"/>
        <dbReference type="ChEBI" id="CHEBI:18107"/>
        <dbReference type="ChEBI" id="CHEBI:43474"/>
        <dbReference type="ChEBI" id="CHEBI:57720"/>
        <dbReference type="EC" id="2.4.2.1"/>
    </reaction>
</comment>
<comment type="similarity">
    <text evidence="1">Belongs to the nucleoside phosphorylase PpnP family.</text>
</comment>
<organism>
    <name type="scientific">Salmonella typhimurium (strain LT2 / SGSC1412 / ATCC 700720)</name>
    <dbReference type="NCBI Taxonomy" id="99287"/>
    <lineage>
        <taxon>Bacteria</taxon>
        <taxon>Pseudomonadati</taxon>
        <taxon>Pseudomonadota</taxon>
        <taxon>Gammaproteobacteria</taxon>
        <taxon>Enterobacterales</taxon>
        <taxon>Enterobacteriaceae</taxon>
        <taxon>Salmonella</taxon>
    </lineage>
</organism>
<proteinExistence type="evidence at protein level"/>
<accession>Q8ZRE7</accession>
<sequence length="94" mass="10158">MLQSNEYFSGKVKSIGFTSSSTGRASVGVMAEGEYTFGTAEPEEMTVVSGALKVLLPGTVEWKVYTAGEVFNVPGHSEFHLQVAEPASYLCRYL</sequence>
<feature type="chain" id="PRO_0000211781" description="Pyrimidine/purine nucleoside phosphorylase">
    <location>
        <begin position="1"/>
        <end position="94"/>
    </location>
</feature>
<feature type="strand" evidence="2">
    <location>
        <begin position="3"/>
        <end position="7"/>
    </location>
</feature>
<feature type="helix" evidence="2">
    <location>
        <begin position="8"/>
        <end position="10"/>
    </location>
</feature>
<feature type="strand" evidence="2">
    <location>
        <begin position="12"/>
        <end position="19"/>
    </location>
</feature>
<feature type="turn" evidence="2">
    <location>
        <begin position="20"/>
        <end position="22"/>
    </location>
</feature>
<feature type="strand" evidence="2">
    <location>
        <begin position="23"/>
        <end position="30"/>
    </location>
</feature>
<feature type="strand" evidence="2">
    <location>
        <begin position="32"/>
        <end position="41"/>
    </location>
</feature>
<feature type="strand" evidence="2">
    <location>
        <begin position="43"/>
        <end position="55"/>
    </location>
</feature>
<feature type="strand" evidence="2">
    <location>
        <begin position="63"/>
        <end position="66"/>
    </location>
</feature>
<feature type="strand" evidence="2">
    <location>
        <begin position="70"/>
        <end position="73"/>
    </location>
</feature>
<feature type="strand" evidence="2">
    <location>
        <begin position="75"/>
        <end position="85"/>
    </location>
</feature>
<feature type="strand" evidence="2">
    <location>
        <begin position="87"/>
        <end position="93"/>
    </location>
</feature>